<accession>A6TFN1</accession>
<keyword id="KW-0378">Hydrolase</keyword>
<keyword id="KW-0460">Magnesium</keyword>
<keyword id="KW-0479">Metal-binding</keyword>
<keyword id="KW-0546">Nucleotide metabolism</keyword>
<evidence type="ECO:0000255" key="1">
    <source>
        <dbReference type="HAMAP-Rule" id="MF_00116"/>
    </source>
</evidence>
<feature type="chain" id="PRO_1000057776" description="Deoxyuridine 5'-triphosphate nucleotidohydrolase">
    <location>
        <begin position="1"/>
        <end position="152"/>
    </location>
</feature>
<feature type="binding site" evidence="1">
    <location>
        <begin position="71"/>
        <end position="73"/>
    </location>
    <ligand>
        <name>substrate</name>
    </ligand>
</feature>
<feature type="binding site" evidence="1">
    <location>
        <position position="84"/>
    </location>
    <ligand>
        <name>substrate</name>
    </ligand>
</feature>
<feature type="binding site" evidence="1">
    <location>
        <begin position="88"/>
        <end position="90"/>
    </location>
    <ligand>
        <name>substrate</name>
    </ligand>
</feature>
<feature type="binding site" evidence="1">
    <location>
        <position position="98"/>
    </location>
    <ligand>
        <name>substrate</name>
    </ligand>
</feature>
<protein>
    <recommendedName>
        <fullName evidence="1">Deoxyuridine 5'-triphosphate nucleotidohydrolase</fullName>
        <shortName evidence="1">dUTPase</shortName>
        <ecNumber evidence="1">3.6.1.23</ecNumber>
    </recommendedName>
    <alternativeName>
        <fullName evidence="1">dUTP pyrophosphatase</fullName>
    </alternativeName>
</protein>
<organism>
    <name type="scientific">Klebsiella pneumoniae subsp. pneumoniae (strain ATCC 700721 / MGH 78578)</name>
    <dbReference type="NCBI Taxonomy" id="272620"/>
    <lineage>
        <taxon>Bacteria</taxon>
        <taxon>Pseudomonadati</taxon>
        <taxon>Pseudomonadota</taxon>
        <taxon>Gammaproteobacteria</taxon>
        <taxon>Enterobacterales</taxon>
        <taxon>Enterobacteriaceae</taxon>
        <taxon>Klebsiella/Raoultella group</taxon>
        <taxon>Klebsiella</taxon>
        <taxon>Klebsiella pneumoniae complex</taxon>
    </lineage>
</organism>
<comment type="function">
    <text evidence="1">This enzyme is involved in nucleotide metabolism: it produces dUMP, the immediate precursor of thymidine nucleotides and it decreases the intracellular concentration of dUTP so that uracil cannot be incorporated into DNA.</text>
</comment>
<comment type="catalytic activity">
    <reaction evidence="1">
        <text>dUTP + H2O = dUMP + diphosphate + H(+)</text>
        <dbReference type="Rhea" id="RHEA:10248"/>
        <dbReference type="ChEBI" id="CHEBI:15377"/>
        <dbReference type="ChEBI" id="CHEBI:15378"/>
        <dbReference type="ChEBI" id="CHEBI:33019"/>
        <dbReference type="ChEBI" id="CHEBI:61555"/>
        <dbReference type="ChEBI" id="CHEBI:246422"/>
        <dbReference type="EC" id="3.6.1.23"/>
    </reaction>
</comment>
<comment type="cofactor">
    <cofactor evidence="1">
        <name>Mg(2+)</name>
        <dbReference type="ChEBI" id="CHEBI:18420"/>
    </cofactor>
</comment>
<comment type="pathway">
    <text evidence="1">Pyrimidine metabolism; dUMP biosynthesis; dUMP from dCTP (dUTP route): step 2/2.</text>
</comment>
<comment type="similarity">
    <text evidence="1">Belongs to the dUTPase family.</text>
</comment>
<reference key="1">
    <citation type="submission" date="2006-09" db="EMBL/GenBank/DDBJ databases">
        <authorList>
            <consortium name="The Klebsiella pneumonia Genome Sequencing Project"/>
            <person name="McClelland M."/>
            <person name="Sanderson E.K."/>
            <person name="Spieth J."/>
            <person name="Clifton W.S."/>
            <person name="Latreille P."/>
            <person name="Sabo A."/>
            <person name="Pepin K."/>
            <person name="Bhonagiri V."/>
            <person name="Porwollik S."/>
            <person name="Ali J."/>
            <person name="Wilson R.K."/>
        </authorList>
    </citation>
    <scope>NUCLEOTIDE SEQUENCE [LARGE SCALE GENOMIC DNA]</scope>
    <source>
        <strain>ATCC 700721 / MGH 78578</strain>
    </source>
</reference>
<dbReference type="EC" id="3.6.1.23" evidence="1"/>
<dbReference type="EMBL" id="CP000647">
    <property type="protein sequence ID" value="ABR79365.1"/>
    <property type="molecule type" value="Genomic_DNA"/>
</dbReference>
<dbReference type="RefSeq" id="WP_004145270.1">
    <property type="nucleotide sequence ID" value="NC_009648.1"/>
</dbReference>
<dbReference type="SMR" id="A6TFN1"/>
<dbReference type="STRING" id="272620.KPN_03980"/>
<dbReference type="jPOST" id="A6TFN1"/>
<dbReference type="PaxDb" id="272620-KPN_03980"/>
<dbReference type="EnsemblBacteria" id="ABR79365">
    <property type="protein sequence ID" value="ABR79365"/>
    <property type="gene ID" value="KPN_03980"/>
</dbReference>
<dbReference type="GeneID" id="93251331"/>
<dbReference type="KEGG" id="kpn:KPN_03980"/>
<dbReference type="HOGENOM" id="CLU_068508_1_1_6"/>
<dbReference type="UniPathway" id="UPA00610">
    <property type="reaction ID" value="UER00666"/>
</dbReference>
<dbReference type="Proteomes" id="UP000000265">
    <property type="component" value="Chromosome"/>
</dbReference>
<dbReference type="GO" id="GO:0004170">
    <property type="term" value="F:dUTP diphosphatase activity"/>
    <property type="evidence" value="ECO:0007669"/>
    <property type="project" value="UniProtKB-UniRule"/>
</dbReference>
<dbReference type="GO" id="GO:0000287">
    <property type="term" value="F:magnesium ion binding"/>
    <property type="evidence" value="ECO:0007669"/>
    <property type="project" value="UniProtKB-UniRule"/>
</dbReference>
<dbReference type="GO" id="GO:0006226">
    <property type="term" value="P:dUMP biosynthetic process"/>
    <property type="evidence" value="ECO:0007669"/>
    <property type="project" value="UniProtKB-UniRule"/>
</dbReference>
<dbReference type="GO" id="GO:0046081">
    <property type="term" value="P:dUTP catabolic process"/>
    <property type="evidence" value="ECO:0007669"/>
    <property type="project" value="InterPro"/>
</dbReference>
<dbReference type="CDD" id="cd07557">
    <property type="entry name" value="trimeric_dUTPase"/>
    <property type="match status" value="1"/>
</dbReference>
<dbReference type="FunFam" id="2.70.40.10:FF:000002">
    <property type="entry name" value="dUTP diphosphatase"/>
    <property type="match status" value="1"/>
</dbReference>
<dbReference type="Gene3D" id="2.70.40.10">
    <property type="match status" value="1"/>
</dbReference>
<dbReference type="HAMAP" id="MF_00116">
    <property type="entry name" value="dUTPase_bact"/>
    <property type="match status" value="1"/>
</dbReference>
<dbReference type="InterPro" id="IPR008181">
    <property type="entry name" value="dUTPase"/>
</dbReference>
<dbReference type="InterPro" id="IPR029054">
    <property type="entry name" value="dUTPase-like"/>
</dbReference>
<dbReference type="InterPro" id="IPR036157">
    <property type="entry name" value="dUTPase-like_sf"/>
</dbReference>
<dbReference type="InterPro" id="IPR033704">
    <property type="entry name" value="dUTPase_trimeric"/>
</dbReference>
<dbReference type="NCBIfam" id="TIGR00576">
    <property type="entry name" value="dut"/>
    <property type="match status" value="1"/>
</dbReference>
<dbReference type="NCBIfam" id="NF001862">
    <property type="entry name" value="PRK00601.1"/>
    <property type="match status" value="1"/>
</dbReference>
<dbReference type="PANTHER" id="PTHR11241">
    <property type="entry name" value="DEOXYURIDINE 5'-TRIPHOSPHATE NUCLEOTIDOHYDROLASE"/>
    <property type="match status" value="1"/>
</dbReference>
<dbReference type="PANTHER" id="PTHR11241:SF0">
    <property type="entry name" value="DEOXYURIDINE 5'-TRIPHOSPHATE NUCLEOTIDOHYDROLASE"/>
    <property type="match status" value="1"/>
</dbReference>
<dbReference type="Pfam" id="PF00692">
    <property type="entry name" value="dUTPase"/>
    <property type="match status" value="1"/>
</dbReference>
<dbReference type="SUPFAM" id="SSF51283">
    <property type="entry name" value="dUTPase-like"/>
    <property type="match status" value="1"/>
</dbReference>
<sequence length="152" mass="16163">MMKKIDVKILDPRVGQQFPLPTYATSGSAGLDLRACLDDAVELAPGATTLLPTGLAIHIADPSLAAVILPRSGLGHKHGVVLGNLVGLIDSDYQGQLMVSVWNRGQQSFIIEPGERIAQMVFVPVVQAEFNLVESFDATDRGEGGFGHSGRK</sequence>
<proteinExistence type="inferred from homology"/>
<name>DUT_KLEP7</name>
<gene>
    <name evidence="1" type="primary">dut</name>
    <name type="ordered locus">KPN78578_39410</name>
    <name type="ORF">KPN_03980</name>
</gene>